<feature type="initiator methionine" description="Removed" evidence="4">
    <location>
        <position position="1"/>
    </location>
</feature>
<feature type="chain" id="PRO_0000442718" description="Multifunctional alkaline phosphatase superfamily protein PehA" evidence="11">
    <location>
        <begin position="2"/>
        <end position="514"/>
    </location>
</feature>
<feature type="active site" description="Nucleophile" evidence="9">
    <location>
        <position position="57"/>
    </location>
</feature>
<feature type="binding site" evidence="2 13">
    <location>
        <position position="12"/>
    </location>
    <ligand>
        <name>Mn(2+)</name>
        <dbReference type="ChEBI" id="CHEBI:29035"/>
    </ligand>
</feature>
<feature type="binding site" description="via 3-oxoalanine" evidence="2 13">
    <location>
        <position position="57"/>
    </location>
    <ligand>
        <name>Mn(2+)</name>
        <dbReference type="ChEBI" id="CHEBI:29035"/>
    </ligand>
</feature>
<feature type="binding site" evidence="2 13">
    <location>
        <position position="324"/>
    </location>
    <ligand>
        <name>Mn(2+)</name>
        <dbReference type="ChEBI" id="CHEBI:29035"/>
    </ligand>
</feature>
<feature type="binding site" evidence="2 13">
    <location>
        <position position="325"/>
    </location>
    <ligand>
        <name>Mn(2+)</name>
        <dbReference type="ChEBI" id="CHEBI:29035"/>
    </ligand>
</feature>
<feature type="modified residue" description="3-oxoalanine (Cys)" evidence="1 2">
    <location>
        <position position="57"/>
    </location>
</feature>
<feature type="mutagenesis site" description="Reduced catalytic activity against phosphate mono-, di-, and triesters, phosphonate monoesters, sulfate monoesters and sulfonate monoesters while KM values are almost unchanged for all of them. 144-fold decrease in kcat and 467-fold reduction in catalytic efficiency with phosphonate monoester as substrate. 103-fold decrease in kcat and 1178-fold reduction in catalytic efficiency with phosphate diester as substrate." evidence="2">
    <original>C</original>
    <variation>A</variation>
    <location>
        <position position="57"/>
    </location>
</feature>
<evidence type="ECO:0000255" key="1">
    <source>
        <dbReference type="PIRSR" id="PIRSR600917-51"/>
    </source>
</evidence>
<evidence type="ECO:0000269" key="2">
    <source>
    </source>
</evidence>
<evidence type="ECO:0000269" key="3">
    <source>
    </source>
</evidence>
<evidence type="ECO:0000269" key="4">
    <source>
    </source>
</evidence>
<evidence type="ECO:0000303" key="5">
    <source>
    </source>
</evidence>
<evidence type="ECO:0000303" key="6">
    <source>
    </source>
</evidence>
<evidence type="ECO:0000303" key="7">
    <source>
    </source>
</evidence>
<evidence type="ECO:0000305" key="8"/>
<evidence type="ECO:0000305" key="9">
    <source>
    </source>
</evidence>
<evidence type="ECO:0000305" key="10">
    <source>
    </source>
</evidence>
<evidence type="ECO:0000305" key="11">
    <source>
    </source>
</evidence>
<evidence type="ECO:0000312" key="12">
    <source>
        <dbReference type="EMBL" id="AAC44467.1"/>
    </source>
</evidence>
<evidence type="ECO:0007744" key="13">
    <source>
        <dbReference type="PDB" id="2W8S"/>
    </source>
</evidence>
<dbReference type="EC" id="3.1.4.-" evidence="4"/>
<dbReference type="EC" id="3.1.-.-" evidence="2 3 4"/>
<dbReference type="EC" id="3.1.3.-" evidence="2 3 4"/>
<dbReference type="EC" id="3.1.6.-" evidence="2"/>
<dbReference type="EMBL" id="U44852">
    <property type="protein sequence ID" value="AAC44467.1"/>
    <property type="molecule type" value="Genomic_DNA"/>
</dbReference>
<dbReference type="PIR" id="T44602">
    <property type="entry name" value="T44602"/>
</dbReference>
<dbReference type="PDB" id="2W8S">
    <property type="method" value="X-ray"/>
    <property type="resolution" value="2.40 A"/>
    <property type="chains" value="A/B/C/D=1-514"/>
</dbReference>
<dbReference type="PDBsum" id="2W8S"/>
<dbReference type="SMR" id="Q45087"/>
<dbReference type="DIP" id="DIP-58542N"/>
<dbReference type="EvolutionaryTrace" id="Q45087"/>
<dbReference type="GO" id="GO:0005737">
    <property type="term" value="C:cytoplasm"/>
    <property type="evidence" value="ECO:0007669"/>
    <property type="project" value="TreeGrafter"/>
</dbReference>
<dbReference type="GO" id="GO:0042802">
    <property type="term" value="F:identical protein binding"/>
    <property type="evidence" value="ECO:0000353"/>
    <property type="project" value="IntAct"/>
</dbReference>
<dbReference type="GO" id="GO:0046872">
    <property type="term" value="F:metal ion binding"/>
    <property type="evidence" value="ECO:0007669"/>
    <property type="project" value="UniProtKB-KW"/>
</dbReference>
<dbReference type="GO" id="GO:0008484">
    <property type="term" value="F:sulfuric ester hydrolase activity"/>
    <property type="evidence" value="ECO:0007669"/>
    <property type="project" value="TreeGrafter"/>
</dbReference>
<dbReference type="CDD" id="cd16028">
    <property type="entry name" value="PMH"/>
    <property type="match status" value="1"/>
</dbReference>
<dbReference type="Gene3D" id="6.10.250.3360">
    <property type="match status" value="1"/>
</dbReference>
<dbReference type="Gene3D" id="3.40.720.10">
    <property type="entry name" value="Alkaline Phosphatase, subunit A"/>
    <property type="match status" value="1"/>
</dbReference>
<dbReference type="InterPro" id="IPR017850">
    <property type="entry name" value="Alkaline_phosphatase_core_sf"/>
</dbReference>
<dbReference type="InterPro" id="IPR054912">
    <property type="entry name" value="HdlasePehA"/>
</dbReference>
<dbReference type="InterPro" id="IPR000917">
    <property type="entry name" value="Sulfatase_N"/>
</dbReference>
<dbReference type="NCBIfam" id="NF045661">
    <property type="entry name" value="HdlasePehA"/>
    <property type="match status" value="1"/>
</dbReference>
<dbReference type="PANTHER" id="PTHR45953">
    <property type="entry name" value="IDURONATE 2-SULFATASE"/>
    <property type="match status" value="1"/>
</dbReference>
<dbReference type="PANTHER" id="PTHR45953:SF1">
    <property type="entry name" value="IDURONATE 2-SULFATASE"/>
    <property type="match status" value="1"/>
</dbReference>
<dbReference type="Pfam" id="PF00884">
    <property type="entry name" value="Sulfatase"/>
    <property type="match status" value="1"/>
</dbReference>
<dbReference type="SUPFAM" id="SSF53649">
    <property type="entry name" value="Alkaline phosphatase-like"/>
    <property type="match status" value="1"/>
</dbReference>
<sequence length="514" mass="58176">MTRKNVLLIVVDQWRADFIPHLMRAEGREPFLKTPNLDRLCREGLTFRNHVTTCVPCGPARASLLTGLYLMNHRAVQNTVPLDQRHLNLGKALRAIGYDPALIGYTTTTPDPRTTSARDPRFTVLGDIMDGFRSVGAFEPNMEGYFGWVAQNGFELPENREDIWLPEGEHSVPGATDKPSRIPKEFSDSTFFTERALTYLKGRDGKPFFLHLGYYRPHPPFVASAPYHAMYKAEDMPAPIRAENPDAEAAQHPLMKHYIDHIRRGSFFHGAEGSGATLDEGEIRQMRATYCGLITEIDDCLGRVFAYLDETGQWDDTLIIFTSDHGEQLGDHHLLGKIGYNAESFRIPLVIKDAGQNRHAGQIEEGFSESIDVMPTILEWLGGETPRACDGRSLLPFLAEGKPSDWRTELHYEFDFRDVFYDQPQNSVQLSQDDCSLCVIEDENYKYVHFAALPPLFFDLKADPHEFSNLAGDPAYAALVRDYAQKALSWRLSHADRTLTHYRSSPQGLTTRNH</sequence>
<reference evidence="12" key="1">
    <citation type="journal article" date="1996" name="J. Biol. Chem.">
        <title>Identification, characterization, and cloning of a phosphonate monoester hydrolase from Burkholderia caryophilli PG2982.</title>
        <authorList>
            <person name="Dotson S.B."/>
            <person name="Smith C.E."/>
            <person name="Ling C.S."/>
            <person name="Barry G.F."/>
            <person name="Kishore G.M."/>
        </authorList>
    </citation>
    <scope>NUCLEOTIDE SEQUENCE [GENOMIC DNA]</scope>
    <scope>PROTEIN SEQUENCE OF 2-36; 134-141; 161-181 AND 306-313</scope>
    <scope>FUNCTION</scope>
    <scope>CATALYTIC ACTIVITY</scope>
    <scope>ACTIVITY REGULATION</scope>
    <scope>BIOPHYSICOCHEMICAL PROPERTIES</scope>
    <scope>PATHWAY</scope>
    <scope>SUBSTRATE SPECIFICITY</scope>
    <scope>SUBUNIT</scope>
    <source>
        <strain evidence="7 12">PG2982</strain>
    </source>
</reference>
<reference evidence="12" key="2">
    <citation type="journal article" date="1996" name="Plant J.">
        <title>A phosphonate monoester hydrolase from Burkholderia caryophilli PG2982 is useful as a conditional lethal gene in plants.</title>
        <authorList>
            <person name="Dotson S.B."/>
            <person name="Lanahan M.B."/>
            <person name="Smith A.G."/>
            <person name="Kishore G.M."/>
        </authorList>
    </citation>
    <scope>CATALYTIC ACTIVITY</scope>
    <scope>BIOTECHNOLOGY</scope>
    <source>
        <strain evidence="6">PG2982</strain>
    </source>
</reference>
<reference evidence="13" key="3">
    <citation type="journal article" date="2010" name="Proc. Natl. Acad. Sci. U.S.A.">
        <title>An efficient, multiply promiscuous hydrolase in the alkaline phosphatase superfamily.</title>
        <authorList>
            <person name="van Loo B."/>
            <person name="Jonas S."/>
            <person name="Babtie A.C."/>
            <person name="Benjdia A."/>
            <person name="Berteau O."/>
            <person name="Hyvonen M."/>
            <person name="Hollfelder F."/>
        </authorList>
    </citation>
    <scope>X-RAY CRYSTALLOGRAPHY (2.40 ANGSTROMS) IN COMPLEX WITH IRON OR ZINC</scope>
    <scope>FUNCTION</scope>
    <scope>CATALYTIC ACTIVITY</scope>
    <scope>COFACTOR</scope>
    <scope>ACTIVITY REGULATION</scope>
    <scope>BIOPHYSICOCHEMICAL PROPERTIES</scope>
    <scope>SUBSTRATE SPECIFICITY</scope>
    <scope>REACTION MECHANISM</scope>
    <scope>SUBUNIT</scope>
    <scope>OXOALANINE AT CYS-57</scope>
    <scope>ACTIVE SITE</scope>
    <scope>MUTAGENESIS OF CYS-57</scope>
    <source>
        <strain evidence="5">PG2982</strain>
    </source>
</reference>
<name>BCPMH_TRICW</name>
<accession>Q45087</accession>
<organism>
    <name type="scientific">Trinickia caryophylli</name>
    <name type="common">Paraburkholderia caryophylli</name>
    <dbReference type="NCBI Taxonomy" id="28094"/>
    <lineage>
        <taxon>Bacteria</taxon>
        <taxon>Pseudomonadati</taxon>
        <taxon>Pseudomonadota</taxon>
        <taxon>Betaproteobacteria</taxon>
        <taxon>Burkholderiales</taxon>
        <taxon>Burkholderiaceae</taxon>
        <taxon>Trinickia</taxon>
    </lineage>
</organism>
<comment type="function">
    <text evidence="2 3 4">Hydrolytic enzyme with a broad substrate specificity acting on phosphate diesters and phosphonate monoesters (PubMed:20133613, PubMed:8824203). Hydrolyzes phosphate mono- and triesters, sulfate monoesters and sulfonate monoesters (PubMed:20133613). Hydrolyzes glyphosate monoesters. Does not hydrolyze DNA or cGMP (PubMed:8824203). Hydrolyzes glyceryl glyphosate, but this substrate has a much lower affinity than the glyphosate monoesters (PubMed:8771792, PubMed:8824203).</text>
</comment>
<comment type="cofactor">
    <cofactor evidence="9">
        <name>Mn(2+)</name>
        <dbReference type="ChEBI" id="CHEBI:29035"/>
    </cofactor>
    <text evidence="5">Mn(2+) is probably the active metal ion. Other metals such as Zn(2+), Ca(2+) and Fe(2+) can also act as cofactors.</text>
</comment>
<comment type="activity regulation">
    <text evidence="4">Anions including Cl(-) and CH3COO(-), and SO4(2-) salts stimulate activity 20-40% at 100 mM.</text>
</comment>
<comment type="biophysicochemical properties">
    <kinetics>
        <KM evidence="2">0.33 mM for phosphate monoester phenyl phosphate (at pH 7.5)</KM>
        <KM evidence="2">0.35 mM for phosphate monoester 4-nitrophenyl phosphate (at pH 7.5)</KM>
        <KM evidence="2">0.071 mM for phosphate diester diphenyl phosphate (at pH 7.5)</KM>
        <KM evidence="2">0.63 mM for phosphate diester p-nitrophenyl ethyl phosphate (at pH 7.5)</KM>
        <KM evidence="2">2.4 mM for phosphate triester paraoxon (at pH 7.5)</KM>
        <KM evidence="2">1.23 mM for phosphonate monoester phenyl phenylphosphonate (at pH 7.5)</KM>
        <KM evidence="2">0.19 mM for phosphonate monoester p-nitrophenyl phenylphosphonate (at pH 7.5)</KM>
        <KM evidence="2">58 mM for sulfate monoester phenyl sulfate (at pH 7.5)</KM>
        <KM evidence="2">68 mM for sulfate monoester p-nitrophenyl sulfate (at pH 7.5)</KM>
        <KM evidence="2">0.51 mM for sulfonate monoester phenyl phenylsulfonate (at pH 7.5)</KM>
        <KM evidence="2">0.24 mM for sulfonate monoester p-nitrophenyl phenylsulfonate (at pH 7.5)</KM>
        <KM evidence="4">49 mM for glyceryl glyphosate (at pH 9.0 and 30 degrees Celsius)</KM>
        <KM evidence="4">2.3 mM for p-nitrophenyl phenylphosphonate (at pH 9.0 and 30 degrees Celsius)</KM>
        <KM evidence="4">0.9 mM for phosphate diester bis(p-nitrophenyl) phosphate (at pH 9.0 and 30 degrees Celsius)</KM>
        <KM evidence="4">4.7 mM for phosphate diester p-nitrophenyl thymidine 5'-monophosphate (at pH 9.0 and 30 degrees Celsius)</KM>
        <Vmax evidence="4">8.7 umol/min/mg enzyme with p-nitrophenyl phenylphosphonate as substrate</Vmax>
        <text evidence="2 4">kcat is 0.0021 sec(-1) with phenyl phosphate as substrate. kcat is 0.077 sec(-1) with 4-nitrophenyl phosphate as substrate. kcat is 2.12 sec(-1) with diphenyl phosphate as substrate. kcat is 5.8 sec(-1) with p-nitrophenyl ethyl phosphate as substrate. kcat is 0.00037 sec(-1) with paraoxon as substrate. kcat is 1.58 sec(-1) with phenyl phenylphosphonate as substrate. kcat is 2.73 sec(-1) with p-nitrophenyl phenylphosphonate as substrate. kcat is 0.001 sec(-1) with phenyl sulfate as substrate. kcat is 0.4 sec(-1) with p-nitrophenyl sulfate as substrate. kcat is 0.007 sec(-1) with phenyl phenylsulfonate as substrate. kcat is 0.12 sec(-1) with p-nitrophenyl phenylsulfonate as substrate (PubMed:20133613). kcat is 28 min(-1) with glyceryl glyphosate as substrate. kcat is 400 min(-1) with p-nitrophenyl phenylphosphonate as substrate. kcat is 620 min(-1) with bis(p-nitrophenyl) phosphate as substrate. kcat is 89 min(-1) with p-nitrophenyl thymidine 5'-monophosphate as substrate (PubMed:8824203).</text>
    </kinetics>
    <phDependence>
        <text evidence="4">Optimum pH is 9.0.</text>
    </phDependence>
</comment>
<comment type="subunit">
    <text evidence="2 4">Homotetramer.</text>
</comment>
<comment type="interaction">
    <interactant intactId="EBI-15830967">
        <id>Q45087</id>
    </interactant>
    <interactant intactId="EBI-15830967">
        <id>Q45087</id>
        <label>pehA</label>
    </interactant>
    <organismsDiffer>false</organismsDiffer>
    <experiments>2</experiments>
</comment>
<comment type="PTM">
    <text evidence="1 2">The conversion to 3-oxoalanine (also known as C-formylglycine, FGly), of a serine or cysteine residue in prokaryotes and of a cysteine residue in eukaryotes, is critical for catalytic activity (By similarity). Phosphate triester hydrolytic activity is retained with unmodified cysteine acting as a nucleophile (PubMed:20133613).</text>
</comment>
<comment type="biotechnology">
    <text evidence="10">Has potential application in plant genetics as a heterologous conditional lethal gene useful for cell ablation and negative (counter) selection.</text>
</comment>
<comment type="similarity">
    <text evidence="5">Belongs to the alkaline phosphatase superfamily.</text>
</comment>
<comment type="caution">
    <text evidence="2 4">There is conflicting evidence for Zn(2+) acting as an active metal ion. According to one report, it inhibits the phosphonate ester hydrolase activity (PubMed:8824203). According to another report, it acts as a cofactor (PubMed:20133613).</text>
</comment>
<proteinExistence type="evidence at protein level"/>
<gene>
    <name evidence="6 7 12" type="primary">pehA</name>
</gene>
<protein>
    <recommendedName>
        <fullName evidence="8">Multifunctional alkaline phosphatase superfamily protein PehA</fullName>
    </recommendedName>
    <alternativeName>
        <fullName evidence="7">Phosphodiesterase</fullName>
        <ecNumber evidence="4">3.1.4.-</ecNumber>
    </alternativeName>
    <alternativeName>
        <fullName evidence="6 7 12">Phosphonate ester hydrolase</fullName>
        <shortName evidence="6 7">PEH</shortName>
        <ecNumber evidence="2 3 4">3.1.-.-</ecNumber>
    </alternativeName>
    <alternativeName>
        <fullName evidence="5 6 7">Phosphonate monoester hydrolase</fullName>
        <shortName evidence="5">BcPMH</shortName>
        <ecNumber evidence="2 3 4">3.1.3.-</ecNumber>
    </alternativeName>
    <alternativeName>
        <fullName evidence="9">Sulfuric ester hydrolase</fullName>
        <ecNumber evidence="2">3.1.6.-</ecNumber>
    </alternativeName>
</protein>
<keyword id="KW-0002">3D-structure</keyword>
<keyword id="KW-0903">Direct protein sequencing</keyword>
<keyword id="KW-0378">Hydrolase</keyword>
<keyword id="KW-0408">Iron</keyword>
<keyword id="KW-0464">Manganese</keyword>
<keyword id="KW-0479">Metal-binding</keyword>
<keyword id="KW-0862">Zinc</keyword>